<reference key="1">
    <citation type="journal article" date="2010" name="PLoS ONE">
        <title>The complete genome sequence of Cupriavidus metallidurans strain CH34, a master survivalist in harsh and anthropogenic environments.</title>
        <authorList>
            <person name="Janssen P.J."/>
            <person name="Van Houdt R."/>
            <person name="Moors H."/>
            <person name="Monsieurs P."/>
            <person name="Morin N."/>
            <person name="Michaux A."/>
            <person name="Benotmane M.A."/>
            <person name="Leys N."/>
            <person name="Vallaeys T."/>
            <person name="Lapidus A."/>
            <person name="Monchy S."/>
            <person name="Medigue C."/>
            <person name="Taghavi S."/>
            <person name="McCorkle S."/>
            <person name="Dunn J."/>
            <person name="van der Lelie D."/>
            <person name="Mergeay M."/>
        </authorList>
    </citation>
    <scope>NUCLEOTIDE SEQUENCE [LARGE SCALE GENOMIC DNA]</scope>
    <source>
        <strain>ATCC 43123 / DSM 2839 / NBRC 102507 / CH34</strain>
    </source>
</reference>
<protein>
    <recommendedName>
        <fullName evidence="1">Dual-specificity RNA methyltransferase RlmN</fullName>
        <ecNumber evidence="1">2.1.1.192</ecNumber>
    </recommendedName>
    <alternativeName>
        <fullName evidence="1">23S rRNA (adenine(2503)-C(2))-methyltransferase</fullName>
    </alternativeName>
    <alternativeName>
        <fullName evidence="1">23S rRNA m2A2503 methyltransferase</fullName>
    </alternativeName>
    <alternativeName>
        <fullName evidence="1">Ribosomal RNA large subunit methyltransferase N</fullName>
    </alternativeName>
    <alternativeName>
        <fullName evidence="1">tRNA (adenine(37)-C(2))-methyltransferase</fullName>
    </alternativeName>
    <alternativeName>
        <fullName evidence="1">tRNA m2A37 methyltransferase</fullName>
    </alternativeName>
</protein>
<proteinExistence type="inferred from homology"/>
<feature type="chain" id="PRO_0000350355" description="Dual-specificity RNA methyltransferase RlmN">
    <location>
        <begin position="1"/>
        <end position="384"/>
    </location>
</feature>
<feature type="domain" description="Radical SAM core" evidence="2">
    <location>
        <begin position="99"/>
        <end position="339"/>
    </location>
</feature>
<feature type="active site" description="Proton acceptor" evidence="1">
    <location>
        <position position="93"/>
    </location>
</feature>
<feature type="active site" description="S-methylcysteine intermediate" evidence="1">
    <location>
        <position position="344"/>
    </location>
</feature>
<feature type="binding site" evidence="1">
    <location>
        <position position="113"/>
    </location>
    <ligand>
        <name>[4Fe-4S] cluster</name>
        <dbReference type="ChEBI" id="CHEBI:49883"/>
        <note>4Fe-4S-S-AdoMet</note>
    </ligand>
</feature>
<feature type="binding site" evidence="1">
    <location>
        <position position="117"/>
    </location>
    <ligand>
        <name>[4Fe-4S] cluster</name>
        <dbReference type="ChEBI" id="CHEBI:49883"/>
        <note>4Fe-4S-S-AdoMet</note>
    </ligand>
</feature>
<feature type="binding site" evidence="1">
    <location>
        <position position="120"/>
    </location>
    <ligand>
        <name>[4Fe-4S] cluster</name>
        <dbReference type="ChEBI" id="CHEBI:49883"/>
        <note>4Fe-4S-S-AdoMet</note>
    </ligand>
</feature>
<feature type="binding site" evidence="1">
    <location>
        <begin position="170"/>
        <end position="171"/>
    </location>
    <ligand>
        <name>S-adenosyl-L-methionine</name>
        <dbReference type="ChEBI" id="CHEBI:59789"/>
    </ligand>
</feature>
<feature type="binding site" evidence="1">
    <location>
        <position position="202"/>
    </location>
    <ligand>
        <name>S-adenosyl-L-methionine</name>
        <dbReference type="ChEBI" id="CHEBI:59789"/>
    </ligand>
</feature>
<feature type="binding site" evidence="1">
    <location>
        <begin position="224"/>
        <end position="226"/>
    </location>
    <ligand>
        <name>S-adenosyl-L-methionine</name>
        <dbReference type="ChEBI" id="CHEBI:59789"/>
    </ligand>
</feature>
<feature type="binding site" evidence="1">
    <location>
        <position position="301"/>
    </location>
    <ligand>
        <name>S-adenosyl-L-methionine</name>
        <dbReference type="ChEBI" id="CHEBI:59789"/>
    </ligand>
</feature>
<feature type="disulfide bond" description="(transient)" evidence="1">
    <location>
        <begin position="106"/>
        <end position="344"/>
    </location>
</feature>
<keyword id="KW-0004">4Fe-4S</keyword>
<keyword id="KW-0963">Cytoplasm</keyword>
<keyword id="KW-1015">Disulfide bond</keyword>
<keyword id="KW-0408">Iron</keyword>
<keyword id="KW-0411">Iron-sulfur</keyword>
<keyword id="KW-0479">Metal-binding</keyword>
<keyword id="KW-0489">Methyltransferase</keyword>
<keyword id="KW-1185">Reference proteome</keyword>
<keyword id="KW-0698">rRNA processing</keyword>
<keyword id="KW-0949">S-adenosyl-L-methionine</keyword>
<keyword id="KW-0808">Transferase</keyword>
<keyword id="KW-0819">tRNA processing</keyword>
<sequence length="384" mass="42266">MNNLVNLLDLDADALTAYCGELGEKPFRARQLQRWIHQFGASHFDAMTDLAKSLREKLATRAEIRSPAAISDHTSSDGTRKWLLDVGAGNAVETVYIPEDTRGTLCVSSQAGCAVNCRFCSTGKQGFSRNLSTGEIIGQLWMAEFAMRAQLGRGPKDERVISNVVMMGMGEPLLNYDAVVPAMRLMLDDNAYGLSRRRVTLSTSGVVPMMDRLSKDLPVALAVSLHASNDALRDVLVPLNRKYPLAELMAACRRYLEFAPRDFITFEYCMLDGVNDGVEHARELLKLVADVPCKFNLIPFNPFPESGLKRSNNEQIRRFAQVLMDAGIVTTIRKTRGDDIDAACGQLAGEVMDRTRLAERGKFGKITPLVPVADAGAPREARPA</sequence>
<comment type="function">
    <text evidence="1">Specifically methylates position 2 of adenine 2503 in 23S rRNA and position 2 of adenine 37 in tRNAs. m2A2503 modification seems to play a crucial role in the proofreading step occurring at the peptidyl transferase center and thus would serve to optimize ribosomal fidelity.</text>
</comment>
<comment type="catalytic activity">
    <reaction evidence="1">
        <text>adenosine(2503) in 23S rRNA + 2 reduced [2Fe-2S]-[ferredoxin] + 2 S-adenosyl-L-methionine = 2-methyladenosine(2503) in 23S rRNA + 5'-deoxyadenosine + L-methionine + 2 oxidized [2Fe-2S]-[ferredoxin] + S-adenosyl-L-homocysteine</text>
        <dbReference type="Rhea" id="RHEA:42916"/>
        <dbReference type="Rhea" id="RHEA-COMP:10000"/>
        <dbReference type="Rhea" id="RHEA-COMP:10001"/>
        <dbReference type="Rhea" id="RHEA-COMP:10152"/>
        <dbReference type="Rhea" id="RHEA-COMP:10282"/>
        <dbReference type="ChEBI" id="CHEBI:17319"/>
        <dbReference type="ChEBI" id="CHEBI:33737"/>
        <dbReference type="ChEBI" id="CHEBI:33738"/>
        <dbReference type="ChEBI" id="CHEBI:57844"/>
        <dbReference type="ChEBI" id="CHEBI:57856"/>
        <dbReference type="ChEBI" id="CHEBI:59789"/>
        <dbReference type="ChEBI" id="CHEBI:74411"/>
        <dbReference type="ChEBI" id="CHEBI:74497"/>
        <dbReference type="EC" id="2.1.1.192"/>
    </reaction>
</comment>
<comment type="catalytic activity">
    <reaction evidence="1">
        <text>adenosine(37) in tRNA + 2 reduced [2Fe-2S]-[ferredoxin] + 2 S-adenosyl-L-methionine = 2-methyladenosine(37) in tRNA + 5'-deoxyadenosine + L-methionine + 2 oxidized [2Fe-2S]-[ferredoxin] + S-adenosyl-L-homocysteine</text>
        <dbReference type="Rhea" id="RHEA:43332"/>
        <dbReference type="Rhea" id="RHEA-COMP:10000"/>
        <dbReference type="Rhea" id="RHEA-COMP:10001"/>
        <dbReference type="Rhea" id="RHEA-COMP:10162"/>
        <dbReference type="Rhea" id="RHEA-COMP:10485"/>
        <dbReference type="ChEBI" id="CHEBI:17319"/>
        <dbReference type="ChEBI" id="CHEBI:33737"/>
        <dbReference type="ChEBI" id="CHEBI:33738"/>
        <dbReference type="ChEBI" id="CHEBI:57844"/>
        <dbReference type="ChEBI" id="CHEBI:57856"/>
        <dbReference type="ChEBI" id="CHEBI:59789"/>
        <dbReference type="ChEBI" id="CHEBI:74411"/>
        <dbReference type="ChEBI" id="CHEBI:74497"/>
        <dbReference type="EC" id="2.1.1.192"/>
    </reaction>
</comment>
<comment type="cofactor">
    <cofactor evidence="1">
        <name>[4Fe-4S] cluster</name>
        <dbReference type="ChEBI" id="CHEBI:49883"/>
    </cofactor>
    <text evidence="1">Binds 1 [4Fe-4S] cluster. The cluster is coordinated with 3 cysteines and an exchangeable S-adenosyl-L-methionine.</text>
</comment>
<comment type="subcellular location">
    <subcellularLocation>
        <location evidence="1">Cytoplasm</location>
    </subcellularLocation>
</comment>
<comment type="miscellaneous">
    <text evidence="1">Reaction proceeds by a ping-pong mechanism involving intermediate methylation of a conserved cysteine residue.</text>
</comment>
<comment type="similarity">
    <text evidence="1">Belongs to the radical SAM superfamily. RlmN family.</text>
</comment>
<evidence type="ECO:0000255" key="1">
    <source>
        <dbReference type="HAMAP-Rule" id="MF_01849"/>
    </source>
</evidence>
<evidence type="ECO:0000255" key="2">
    <source>
        <dbReference type="PROSITE-ProRule" id="PRU01266"/>
    </source>
</evidence>
<name>RLMN_CUPMC</name>
<gene>
    <name evidence="1" type="primary">rlmN</name>
    <name type="ordered locus">Rmet_2109</name>
</gene>
<accession>Q1LLI8</accession>
<organism>
    <name type="scientific">Cupriavidus metallidurans (strain ATCC 43123 / DSM 2839 / NBRC 102507 / CH34)</name>
    <name type="common">Ralstonia metallidurans</name>
    <dbReference type="NCBI Taxonomy" id="266264"/>
    <lineage>
        <taxon>Bacteria</taxon>
        <taxon>Pseudomonadati</taxon>
        <taxon>Pseudomonadota</taxon>
        <taxon>Betaproteobacteria</taxon>
        <taxon>Burkholderiales</taxon>
        <taxon>Burkholderiaceae</taxon>
        <taxon>Cupriavidus</taxon>
    </lineage>
</organism>
<dbReference type="EC" id="2.1.1.192" evidence="1"/>
<dbReference type="EMBL" id="CP000352">
    <property type="protein sequence ID" value="ABF08988.1"/>
    <property type="molecule type" value="Genomic_DNA"/>
</dbReference>
<dbReference type="RefSeq" id="WP_011516822.1">
    <property type="nucleotide sequence ID" value="NC_007973.1"/>
</dbReference>
<dbReference type="SMR" id="Q1LLI8"/>
<dbReference type="STRING" id="266264.Rmet_2109"/>
<dbReference type="KEGG" id="rme:Rmet_2109"/>
<dbReference type="eggNOG" id="COG0820">
    <property type="taxonomic scope" value="Bacteria"/>
</dbReference>
<dbReference type="HOGENOM" id="CLU_029101_0_0_4"/>
<dbReference type="Proteomes" id="UP000002429">
    <property type="component" value="Chromosome"/>
</dbReference>
<dbReference type="GO" id="GO:0005737">
    <property type="term" value="C:cytoplasm"/>
    <property type="evidence" value="ECO:0007669"/>
    <property type="project" value="UniProtKB-SubCell"/>
</dbReference>
<dbReference type="GO" id="GO:0051539">
    <property type="term" value="F:4 iron, 4 sulfur cluster binding"/>
    <property type="evidence" value="ECO:0007669"/>
    <property type="project" value="UniProtKB-UniRule"/>
</dbReference>
<dbReference type="GO" id="GO:0046872">
    <property type="term" value="F:metal ion binding"/>
    <property type="evidence" value="ECO:0007669"/>
    <property type="project" value="UniProtKB-KW"/>
</dbReference>
<dbReference type="GO" id="GO:0070040">
    <property type="term" value="F:rRNA (adenine(2503)-C2-)-methyltransferase activity"/>
    <property type="evidence" value="ECO:0007669"/>
    <property type="project" value="UniProtKB-UniRule"/>
</dbReference>
<dbReference type="GO" id="GO:0019843">
    <property type="term" value="F:rRNA binding"/>
    <property type="evidence" value="ECO:0007669"/>
    <property type="project" value="UniProtKB-UniRule"/>
</dbReference>
<dbReference type="GO" id="GO:0002935">
    <property type="term" value="F:tRNA (adenine(37)-C2)-methyltransferase activity"/>
    <property type="evidence" value="ECO:0007669"/>
    <property type="project" value="UniProtKB-UniRule"/>
</dbReference>
<dbReference type="GO" id="GO:0000049">
    <property type="term" value="F:tRNA binding"/>
    <property type="evidence" value="ECO:0007669"/>
    <property type="project" value="UniProtKB-UniRule"/>
</dbReference>
<dbReference type="GO" id="GO:0070475">
    <property type="term" value="P:rRNA base methylation"/>
    <property type="evidence" value="ECO:0007669"/>
    <property type="project" value="UniProtKB-UniRule"/>
</dbReference>
<dbReference type="GO" id="GO:0030488">
    <property type="term" value="P:tRNA methylation"/>
    <property type="evidence" value="ECO:0007669"/>
    <property type="project" value="UniProtKB-UniRule"/>
</dbReference>
<dbReference type="CDD" id="cd01335">
    <property type="entry name" value="Radical_SAM"/>
    <property type="match status" value="1"/>
</dbReference>
<dbReference type="FunFam" id="1.10.150.530:FF:000003">
    <property type="entry name" value="Dual-specificity RNA methyltransferase RlmN"/>
    <property type="match status" value="1"/>
</dbReference>
<dbReference type="FunFam" id="3.20.20.70:FF:000008">
    <property type="entry name" value="Dual-specificity RNA methyltransferase RlmN"/>
    <property type="match status" value="1"/>
</dbReference>
<dbReference type="Gene3D" id="1.10.150.530">
    <property type="match status" value="1"/>
</dbReference>
<dbReference type="Gene3D" id="3.20.20.70">
    <property type="entry name" value="Aldolase class I"/>
    <property type="match status" value="1"/>
</dbReference>
<dbReference type="HAMAP" id="MF_01849">
    <property type="entry name" value="RNA_methyltr_RlmN"/>
    <property type="match status" value="1"/>
</dbReference>
<dbReference type="InterPro" id="IPR013785">
    <property type="entry name" value="Aldolase_TIM"/>
</dbReference>
<dbReference type="InterPro" id="IPR040072">
    <property type="entry name" value="Methyltransferase_A"/>
</dbReference>
<dbReference type="InterPro" id="IPR048641">
    <property type="entry name" value="RlmN_N"/>
</dbReference>
<dbReference type="InterPro" id="IPR027492">
    <property type="entry name" value="RNA_MTrfase_RlmN"/>
</dbReference>
<dbReference type="InterPro" id="IPR004383">
    <property type="entry name" value="rRNA_lsu_MTrfase_RlmN/Cfr"/>
</dbReference>
<dbReference type="InterPro" id="IPR007197">
    <property type="entry name" value="rSAM"/>
</dbReference>
<dbReference type="NCBIfam" id="TIGR00048">
    <property type="entry name" value="rRNA_mod_RlmN"/>
    <property type="match status" value="1"/>
</dbReference>
<dbReference type="PANTHER" id="PTHR30544">
    <property type="entry name" value="23S RRNA METHYLTRANSFERASE"/>
    <property type="match status" value="1"/>
</dbReference>
<dbReference type="PANTHER" id="PTHR30544:SF5">
    <property type="entry name" value="RADICAL SAM CORE DOMAIN-CONTAINING PROTEIN"/>
    <property type="match status" value="1"/>
</dbReference>
<dbReference type="Pfam" id="PF04055">
    <property type="entry name" value="Radical_SAM"/>
    <property type="match status" value="1"/>
</dbReference>
<dbReference type="Pfam" id="PF21016">
    <property type="entry name" value="RlmN_N"/>
    <property type="match status" value="1"/>
</dbReference>
<dbReference type="PIRSF" id="PIRSF006004">
    <property type="entry name" value="CHP00048"/>
    <property type="match status" value="1"/>
</dbReference>
<dbReference type="SFLD" id="SFLDF00275">
    <property type="entry name" value="adenosine_C2_methyltransferase"/>
    <property type="match status" value="1"/>
</dbReference>
<dbReference type="SFLD" id="SFLDG01062">
    <property type="entry name" value="methyltransferase_(Class_A)"/>
    <property type="match status" value="1"/>
</dbReference>
<dbReference type="SUPFAM" id="SSF102114">
    <property type="entry name" value="Radical SAM enzymes"/>
    <property type="match status" value="1"/>
</dbReference>
<dbReference type="PROSITE" id="PS51918">
    <property type="entry name" value="RADICAL_SAM"/>
    <property type="match status" value="1"/>
</dbReference>